<comment type="function">
    <text>Arylphorin is a larval storage protein (LSP) which may serve as a storage protein used primarily as a source of aromatic amino acids for protein synthesis during metamorphosis. It is a constituent of the sclerotizing system of the cuticle, and serves as a carrier for ecdysteroid hormone.</text>
</comment>
<comment type="subunit">
    <text>Heterohexamer.</text>
</comment>
<comment type="subcellular location">
    <subcellularLocation>
        <location>Secreted</location>
        <location>Extracellular space</location>
    </subcellularLocation>
</comment>
<comment type="tissue specificity">
    <text>Fat body.</text>
</comment>
<comment type="similarity">
    <text evidence="2">Belongs to the hemocyanin family.</text>
</comment>
<reference key="1">
    <citation type="journal article" date="1991" name="Biochem. Biophys. Res. Commun.">
        <title>Complete cDNA and gene sequence of the developmentally regulated arylphorin of Calliphora vicina and its homology to insect hemolymph proteins and arthropod hemocyanins.</title>
        <authorList>
            <person name="Naumann U."/>
            <person name="Scheller K."/>
        </authorList>
    </citation>
    <scope>NUCLEOTIDE SEQUENCE [MRNA]</scope>
    <source>
        <tissue>Fat body</tissue>
    </source>
</reference>
<sequence>MKIAIVLLAIIALVAASSISKHEVKIADKEFLAKQKFLFEIVYRVEDPLMFEEWIKMGKTFTFDKSGYTHFDMYMEKFYEAYKYGAILPKGEFFYYAKNWETFQRNVAFARMHFNEGMFVYALTLAVIHRDDFQGLILPSIHEIFPQYFFNSKFVYEAEKFDYDVWSKYIMYEKEYKDILYKDYSTFYKNHDNHHYYYFTKDFKTYQWWKMMGLGEHWYSEDRFMLRDNMNKYNKDSKYLEIFEGTKMFFMPVDYTRDIEFFNKESVLSYFTEDVGLNTYWYYLNMDYAFILDGKTFGLNKDRRGEYWLYNVRQLLSRYYMERLTHGYGEIPHFSFLNTIEHGYDSQLVYNNGVGFSYRKNYYEVESYGKFSYYYKVMDFFNRLDEIITKGVYVTYEGKTIDLRKPESIEYIGSIMQGNVDTFDNYFFKYRYMFAHMYFGDVNTHDFEVFPHIFLNYETMMRDPMFYMFYKKIASVYFQFFNYVKPYTHEELLFPGVTIKDVKVSELVTYFDLVDFDVTNLMNDEMTFVDGQFVWDKTLLARQMRLNHKPFDFDFVIESDKSHKVVIRTFLGPKYDEFGRVITLTENRQNFMEIDSFIYTLKSGVNDFKRLSKDFYWTVEDRTTYNELYKYVMLALQGKYDFPLDISEPHCGFPDRLVLPHGWYKGMPMQFFFYIAPYTASYGPFSTYDSTYACGIGSGVRHIDEMPFGYPFDREIDEYEFFVPNMYFKDVKIYHQDTFDKYYGKKYENFGHFDYSYYH</sequence>
<organism>
    <name type="scientific">Calliphora vicina</name>
    <name type="common">Blue blowfly</name>
    <name type="synonym">Calliphora erythrocephala</name>
    <dbReference type="NCBI Taxonomy" id="7373"/>
    <lineage>
        <taxon>Eukaryota</taxon>
        <taxon>Metazoa</taxon>
        <taxon>Ecdysozoa</taxon>
        <taxon>Arthropoda</taxon>
        <taxon>Hexapoda</taxon>
        <taxon>Insecta</taxon>
        <taxon>Pterygota</taxon>
        <taxon>Neoptera</taxon>
        <taxon>Endopterygota</taxon>
        <taxon>Diptera</taxon>
        <taxon>Brachycera</taxon>
        <taxon>Muscomorpha</taxon>
        <taxon>Oestroidea</taxon>
        <taxon>Calliphoridae</taxon>
        <taxon>Calliphorinae</taxon>
        <taxon>Calliphora</taxon>
    </lineage>
</organism>
<dbReference type="EMBL" id="M76480">
    <property type="status" value="NOT_ANNOTATED_CDS"/>
    <property type="molecule type" value="mRNA"/>
</dbReference>
<dbReference type="EMBL" id="X59391">
    <property type="protein sequence ID" value="CAA42034.1"/>
    <property type="molecule type" value="mRNA"/>
</dbReference>
<dbReference type="PIR" id="JQ1045">
    <property type="entry name" value="JQ1045"/>
</dbReference>
<dbReference type="SMR" id="P28513"/>
<dbReference type="GO" id="GO:0005576">
    <property type="term" value="C:extracellular region"/>
    <property type="evidence" value="ECO:0007669"/>
    <property type="project" value="UniProtKB-SubCell"/>
</dbReference>
<dbReference type="GO" id="GO:0045735">
    <property type="term" value="F:nutrient reservoir activity"/>
    <property type="evidence" value="ECO:0007669"/>
    <property type="project" value="UniProtKB-KW"/>
</dbReference>
<dbReference type="Gene3D" id="1.10.1280.10">
    <property type="entry name" value="Di-copper center containing domain from catechol oxidase"/>
    <property type="match status" value="1"/>
</dbReference>
<dbReference type="Gene3D" id="2.60.40.1520">
    <property type="entry name" value="Hemocyanin, C-terminal domain"/>
    <property type="match status" value="1"/>
</dbReference>
<dbReference type="Gene3D" id="1.20.1370.10">
    <property type="entry name" value="Hemocyanin, N-terminal domain"/>
    <property type="match status" value="1"/>
</dbReference>
<dbReference type="InterPro" id="IPR008922">
    <property type="entry name" value="Di-copper_centre_dom_sf"/>
</dbReference>
<dbReference type="InterPro" id="IPR013788">
    <property type="entry name" value="Hemocyanin/hexamerin"/>
</dbReference>
<dbReference type="InterPro" id="IPR000896">
    <property type="entry name" value="Hemocyanin/hexamerin_mid_dom"/>
</dbReference>
<dbReference type="InterPro" id="IPR005203">
    <property type="entry name" value="Hemocyanin_C"/>
</dbReference>
<dbReference type="InterPro" id="IPR037020">
    <property type="entry name" value="Hemocyanin_C_sf"/>
</dbReference>
<dbReference type="InterPro" id="IPR005204">
    <property type="entry name" value="Hemocyanin_N"/>
</dbReference>
<dbReference type="InterPro" id="IPR036697">
    <property type="entry name" value="Hemocyanin_N_sf"/>
</dbReference>
<dbReference type="InterPro" id="IPR014756">
    <property type="entry name" value="Ig_E-set"/>
</dbReference>
<dbReference type="PANTHER" id="PTHR11511:SF5">
    <property type="entry name" value="FAT-BODY PROTEIN 1-RELATED"/>
    <property type="match status" value="1"/>
</dbReference>
<dbReference type="PANTHER" id="PTHR11511">
    <property type="entry name" value="LARVAL STORAGE PROTEIN/PHENOLOXIDASE"/>
    <property type="match status" value="1"/>
</dbReference>
<dbReference type="Pfam" id="PF03723">
    <property type="entry name" value="Hemocyanin_C"/>
    <property type="match status" value="1"/>
</dbReference>
<dbReference type="Pfam" id="PF00372">
    <property type="entry name" value="Hemocyanin_M"/>
    <property type="match status" value="2"/>
</dbReference>
<dbReference type="Pfam" id="PF03722">
    <property type="entry name" value="Hemocyanin_N"/>
    <property type="match status" value="2"/>
</dbReference>
<dbReference type="PRINTS" id="PR00187">
    <property type="entry name" value="HAEMOCYANIN"/>
</dbReference>
<dbReference type="SUPFAM" id="SSF48056">
    <property type="entry name" value="Di-copper centre-containing domain"/>
    <property type="match status" value="1"/>
</dbReference>
<dbReference type="SUPFAM" id="SSF81296">
    <property type="entry name" value="E set domains"/>
    <property type="match status" value="1"/>
</dbReference>
<dbReference type="SUPFAM" id="SSF48050">
    <property type="entry name" value="Hemocyanin, N-terminal domain"/>
    <property type="match status" value="1"/>
</dbReference>
<dbReference type="PROSITE" id="PS00210">
    <property type="entry name" value="HEMOCYANIN_2"/>
    <property type="match status" value="1"/>
</dbReference>
<keyword id="KW-0964">Secreted</keyword>
<keyword id="KW-0732">Signal</keyword>
<keyword id="KW-0758">Storage protein</keyword>
<accession>P28513</accession>
<accession>Q23815</accession>
<proteinExistence type="evidence at transcript level"/>
<feature type="signal peptide" evidence="1">
    <location>
        <begin position="1"/>
        <end position="16"/>
    </location>
</feature>
<feature type="chain" id="PRO_0000013331" description="Arylphorin subunit A4">
    <location>
        <begin position="17"/>
        <end position="759"/>
    </location>
</feature>
<feature type="sequence conflict" description="In Ref. 1; CAA42034." evidence="2" ref="1">
    <original>N</original>
    <variation>D</variation>
    <location>
        <position position="231"/>
    </location>
</feature>
<feature type="sequence conflict" description="In Ref. 1; CAA42034." evidence="2" ref="1">
    <original>N</original>
    <variation>H</variation>
    <location>
        <position position="351"/>
    </location>
</feature>
<feature type="sequence conflict" description="In Ref. 1; CAA42034." evidence="2" ref="1">
    <original>D</original>
    <variation>E</variation>
    <location>
        <position position="607"/>
    </location>
</feature>
<feature type="sequence conflict" description="In Ref. 1; CAA42034." evidence="2" ref="1">
    <original>G</original>
    <variation>E</variation>
    <location>
        <position position="683"/>
    </location>
</feature>
<name>ARY1_CALVI</name>
<protein>
    <recommendedName>
        <fullName>Arylphorin subunit A4</fullName>
    </recommendedName>
</protein>
<evidence type="ECO:0000255" key="1"/>
<evidence type="ECO:0000305" key="2"/>